<evidence type="ECO:0000255" key="1"/>
<evidence type="ECO:0000255" key="2">
    <source>
        <dbReference type="PROSITE-ProRule" id="PRU00517"/>
    </source>
</evidence>
<evidence type="ECO:0000255" key="3">
    <source>
        <dbReference type="PROSITE-ProRule" id="PRU01007"/>
    </source>
</evidence>
<evidence type="ECO:0000269" key="4">
    <source>
    </source>
</evidence>
<evidence type="ECO:0000269" key="5">
    <source>
    </source>
</evidence>
<evidence type="ECO:0000303" key="6">
    <source>
    </source>
</evidence>
<evidence type="ECO:0000305" key="7"/>
<evidence type="ECO:0000305" key="8">
    <source>
    </source>
</evidence>
<evidence type="ECO:0000312" key="9">
    <source>
        <dbReference type="Araport" id="AT1G11790"/>
    </source>
</evidence>
<evidence type="ECO:0000312" key="10">
    <source>
        <dbReference type="EMBL" id="AAD30242.1"/>
    </source>
</evidence>
<comment type="function">
    <text evidence="4">Converts the prephenate produced from the shikimate-chorismate pathway into phenylalanine (PubMed:17726025). Dehydratase that uses arogenate and prephenate as substrates (PubMed:17726025). Utilzes more efficiently arogenate than prephenate (PubMed:17726025).</text>
</comment>
<comment type="catalytic activity">
    <reaction evidence="4">
        <text>L-arogenate + H(+) = L-phenylalanine + CO2 + H2O</text>
        <dbReference type="Rhea" id="RHEA:12536"/>
        <dbReference type="ChEBI" id="CHEBI:15377"/>
        <dbReference type="ChEBI" id="CHEBI:15378"/>
        <dbReference type="ChEBI" id="CHEBI:16526"/>
        <dbReference type="ChEBI" id="CHEBI:58095"/>
        <dbReference type="ChEBI" id="CHEBI:58180"/>
        <dbReference type="EC" id="4.2.1.91"/>
    </reaction>
    <physiologicalReaction direction="left-to-right" evidence="4">
        <dbReference type="Rhea" id="RHEA:12537"/>
    </physiologicalReaction>
</comment>
<comment type="catalytic activity">
    <reaction evidence="4">
        <text>prephenate + H(+) = 3-phenylpyruvate + CO2 + H2O</text>
        <dbReference type="Rhea" id="RHEA:21648"/>
        <dbReference type="ChEBI" id="CHEBI:15377"/>
        <dbReference type="ChEBI" id="CHEBI:15378"/>
        <dbReference type="ChEBI" id="CHEBI:16526"/>
        <dbReference type="ChEBI" id="CHEBI:18005"/>
        <dbReference type="ChEBI" id="CHEBI:29934"/>
        <dbReference type="EC" id="4.2.1.51"/>
    </reaction>
    <physiologicalReaction direction="left-to-right" evidence="4">
        <dbReference type="Rhea" id="RHEA:21649"/>
    </physiologicalReaction>
</comment>
<comment type="biophysicochemical properties">
    <kinetics>
        <KM evidence="4">3.05 mM for arogenate</KM>
        <KM evidence="4">0.8 mM for prephenate</KM>
        <Vmax evidence="4">31.0 pmol/sec/ug enzyme with arogenate as substrate</Vmax>
        <Vmax evidence="4">0.28 pmol/sec/ug enzyme with prephenate as substrate</Vmax>
    </kinetics>
</comment>
<comment type="pathway">
    <text evidence="8">Amino-acid biosynthesis; L-phenylalanine biosynthesis; L-phenylalanine from L-arogenate: step 1/1.</text>
</comment>
<comment type="pathway">
    <text evidence="8">Amino-acid biosynthesis; L-phenylalanine biosynthesis; phenylpyruvate from prephenate: step 1/1.</text>
</comment>
<comment type="subcellular location">
    <subcellularLocation>
        <location evidence="5">Plastid</location>
        <location evidence="5">Chloroplast stroma</location>
    </subcellularLocation>
</comment>
<comment type="alternative products">
    <event type="alternative splicing"/>
    <isoform>
        <id>Q9SA96-1</id>
        <name>1</name>
        <sequence type="displayed"/>
    </isoform>
    <isoform>
        <id>Q9SA96-2</id>
        <name>2</name>
        <sequence type="described" ref="VSP_037227 VSP_037228"/>
    </isoform>
</comment>
<comment type="tissue specificity">
    <text evidence="4">Expressed in roots, leaves, stems, flowers and siliques.</text>
</comment>
<protein>
    <recommendedName>
        <fullName evidence="7">Arogenate dehydratase/prephenate dehydratase 1, chloroplastic</fullName>
        <shortName evidence="6">AtADT1</shortName>
        <shortName evidence="6">AtPDT1</shortName>
        <ecNumber evidence="4">4.2.1.51</ecNumber>
        <ecNumber evidence="4">4.2.1.91</ecNumber>
    </recommendedName>
</protein>
<proteinExistence type="evidence at protein level"/>
<reference key="1">
    <citation type="submission" date="2006-02" db="EMBL/GenBank/DDBJ databases">
        <authorList>
            <person name="Matringe M."/>
            <person name="Grisollet D."/>
            <person name="Rippert P."/>
        </authorList>
    </citation>
    <scope>NUCLEOTIDE SEQUENCE [MRNA] (ISOFORM 1)</scope>
    <source>
        <strain>cv. Columbia</strain>
    </source>
</reference>
<reference key="2">
    <citation type="journal article" date="2000" name="Nature">
        <title>Sequence and analysis of chromosome 1 of the plant Arabidopsis thaliana.</title>
        <authorList>
            <person name="Theologis A."/>
            <person name="Ecker J.R."/>
            <person name="Palm C.J."/>
            <person name="Federspiel N.A."/>
            <person name="Kaul S."/>
            <person name="White O."/>
            <person name="Alonso J."/>
            <person name="Altafi H."/>
            <person name="Araujo R."/>
            <person name="Bowman C.L."/>
            <person name="Brooks S.Y."/>
            <person name="Buehler E."/>
            <person name="Chan A."/>
            <person name="Chao Q."/>
            <person name="Chen H."/>
            <person name="Cheuk R.F."/>
            <person name="Chin C.W."/>
            <person name="Chung M.K."/>
            <person name="Conn L."/>
            <person name="Conway A.B."/>
            <person name="Conway A.R."/>
            <person name="Creasy T.H."/>
            <person name="Dewar K."/>
            <person name="Dunn P."/>
            <person name="Etgu P."/>
            <person name="Feldblyum T.V."/>
            <person name="Feng J.-D."/>
            <person name="Fong B."/>
            <person name="Fujii C.Y."/>
            <person name="Gill J.E."/>
            <person name="Goldsmith A.D."/>
            <person name="Haas B."/>
            <person name="Hansen N.F."/>
            <person name="Hughes B."/>
            <person name="Huizar L."/>
            <person name="Hunter J.L."/>
            <person name="Jenkins J."/>
            <person name="Johnson-Hopson C."/>
            <person name="Khan S."/>
            <person name="Khaykin E."/>
            <person name="Kim C.J."/>
            <person name="Koo H.L."/>
            <person name="Kremenetskaia I."/>
            <person name="Kurtz D.B."/>
            <person name="Kwan A."/>
            <person name="Lam B."/>
            <person name="Langin-Hooper S."/>
            <person name="Lee A."/>
            <person name="Lee J.M."/>
            <person name="Lenz C.A."/>
            <person name="Li J.H."/>
            <person name="Li Y.-P."/>
            <person name="Lin X."/>
            <person name="Liu S.X."/>
            <person name="Liu Z.A."/>
            <person name="Luros J.S."/>
            <person name="Maiti R."/>
            <person name="Marziali A."/>
            <person name="Militscher J."/>
            <person name="Miranda M."/>
            <person name="Nguyen M."/>
            <person name="Nierman W.C."/>
            <person name="Osborne B.I."/>
            <person name="Pai G."/>
            <person name="Peterson J."/>
            <person name="Pham P.K."/>
            <person name="Rizzo M."/>
            <person name="Rooney T."/>
            <person name="Rowley D."/>
            <person name="Sakano H."/>
            <person name="Salzberg S.L."/>
            <person name="Schwartz J.R."/>
            <person name="Shinn P."/>
            <person name="Southwick A.M."/>
            <person name="Sun H."/>
            <person name="Tallon L.J."/>
            <person name="Tambunga G."/>
            <person name="Toriumi M.J."/>
            <person name="Town C.D."/>
            <person name="Utterback T."/>
            <person name="Van Aken S."/>
            <person name="Vaysberg M."/>
            <person name="Vysotskaia V.S."/>
            <person name="Walker M."/>
            <person name="Wu D."/>
            <person name="Yu G."/>
            <person name="Fraser C.M."/>
            <person name="Venter J.C."/>
            <person name="Davis R.W."/>
        </authorList>
    </citation>
    <scope>NUCLEOTIDE SEQUENCE [LARGE SCALE GENOMIC DNA]</scope>
    <source>
        <strain>cv. Columbia</strain>
    </source>
</reference>
<reference key="3">
    <citation type="journal article" date="2017" name="Plant J.">
        <title>Araport11: a complete reannotation of the Arabidopsis thaliana reference genome.</title>
        <authorList>
            <person name="Cheng C.Y."/>
            <person name="Krishnakumar V."/>
            <person name="Chan A.P."/>
            <person name="Thibaud-Nissen F."/>
            <person name="Schobel S."/>
            <person name="Town C.D."/>
        </authorList>
    </citation>
    <scope>GENOME REANNOTATION</scope>
    <source>
        <strain>cv. Columbia</strain>
    </source>
</reference>
<reference key="4">
    <citation type="journal article" date="2003" name="Science">
        <title>Empirical analysis of transcriptional activity in the Arabidopsis genome.</title>
        <authorList>
            <person name="Yamada K."/>
            <person name="Lim J."/>
            <person name="Dale J.M."/>
            <person name="Chen H."/>
            <person name="Shinn P."/>
            <person name="Palm C.J."/>
            <person name="Southwick A.M."/>
            <person name="Wu H.C."/>
            <person name="Kim C.J."/>
            <person name="Nguyen M."/>
            <person name="Pham P.K."/>
            <person name="Cheuk R.F."/>
            <person name="Karlin-Newmann G."/>
            <person name="Liu S.X."/>
            <person name="Lam B."/>
            <person name="Sakano H."/>
            <person name="Wu T."/>
            <person name="Yu G."/>
            <person name="Miranda M."/>
            <person name="Quach H.L."/>
            <person name="Tripp M."/>
            <person name="Chang C.H."/>
            <person name="Lee J.M."/>
            <person name="Toriumi M.J."/>
            <person name="Chan M.M."/>
            <person name="Tang C.C."/>
            <person name="Onodera C.S."/>
            <person name="Deng J.M."/>
            <person name="Akiyama K."/>
            <person name="Ansari Y."/>
            <person name="Arakawa T."/>
            <person name="Banh J."/>
            <person name="Banno F."/>
            <person name="Bowser L."/>
            <person name="Brooks S.Y."/>
            <person name="Carninci P."/>
            <person name="Chao Q."/>
            <person name="Choy N."/>
            <person name="Enju A."/>
            <person name="Goldsmith A.D."/>
            <person name="Gurjal M."/>
            <person name="Hansen N.F."/>
            <person name="Hayashizaki Y."/>
            <person name="Johnson-Hopson C."/>
            <person name="Hsuan V.W."/>
            <person name="Iida K."/>
            <person name="Karnes M."/>
            <person name="Khan S."/>
            <person name="Koesema E."/>
            <person name="Ishida J."/>
            <person name="Jiang P.X."/>
            <person name="Jones T."/>
            <person name="Kawai J."/>
            <person name="Kamiya A."/>
            <person name="Meyers C."/>
            <person name="Nakajima M."/>
            <person name="Narusaka M."/>
            <person name="Seki M."/>
            <person name="Sakurai T."/>
            <person name="Satou M."/>
            <person name="Tamse R."/>
            <person name="Vaysberg M."/>
            <person name="Wallender E.K."/>
            <person name="Wong C."/>
            <person name="Yamamura Y."/>
            <person name="Yuan S."/>
            <person name="Shinozaki K."/>
            <person name="Davis R.W."/>
            <person name="Theologis A."/>
            <person name="Ecker J.R."/>
        </authorList>
    </citation>
    <scope>NUCLEOTIDE SEQUENCE [LARGE SCALE MRNA] (ISOFORM 1)</scope>
    <source>
        <strain>cv. Columbia</strain>
    </source>
</reference>
<reference key="5">
    <citation type="journal article" date="2007" name="J. Biol. Chem.">
        <title>Phenylalanine biosynthesis in Arabidopsis thaliana. Identification and characterization of arogenate dehydratases.</title>
        <authorList>
            <person name="Cho M.-H."/>
            <person name="Corea O.R.A."/>
            <person name="Yang H."/>
            <person name="Bedgar D.L."/>
            <person name="Laskar D.D."/>
            <person name="Anterola A.M."/>
            <person name="Moog-Anterola F.A."/>
            <person name="Hood R.L."/>
            <person name="Kohalmi S.E."/>
            <person name="Bernards M.A."/>
            <person name="Kang C."/>
            <person name="Davin L.B."/>
            <person name="Lewis N.G."/>
        </authorList>
    </citation>
    <scope>FUNCTION</scope>
    <scope>CATALYTIC ACTIVITY</scope>
    <scope>TISSUE SPECIFICITY</scope>
    <scope>BIOPHYSICOCHEMICAL PROPERTIES</scope>
</reference>
<reference key="6">
    <citation type="journal article" date="2009" name="Plant Physiol.">
        <title>Tyrosine and phenylalanine are synthesized within the plastids in Arabidopsis.</title>
        <authorList>
            <person name="Rippert P."/>
            <person name="Puyaubert J."/>
            <person name="Grisollet D."/>
            <person name="Derrier L."/>
            <person name="Matringe M."/>
        </authorList>
    </citation>
    <scope>SUBCELLULAR LOCATION</scope>
</reference>
<accession>Q9SA96</accession>
<accession>Q2V4P0</accession>
<accession>Q94B20</accession>
<sequence length="392" mass="43605">MALRCFPIWVCPQTTHHRSPLMGLAEFDADKRRRFCLWECSSSASQRAVTAIEGEIPFSRELKKSSDELGLTQETQSLSFHRDLSMLPKPLTANSLYSSDGDDSKVRISFQGIPGAYSETAALKAFPNCETVPCEQFEAAFQAVELWLVDKAVLPIENSVGGSIHRNYDLLLRHRLHIVQEVHLPVNHCLLGVPGVKKEDIKCVLSHPQALDQCVNSLNNLGIQRISAKDTATAAQTVSSSGKIDVGAIASVRAANIYGLDILAENIQDDVNNVTRFLILAREPMIPRTDRPYKTSIVFSLEEGPGVLFKALAVFALRSINLSKIESRPQRRRPLRVVDGSNNGSAKYFDYLFYIDFEASMADTRAQHALGHLQEFASFIRILGCYPMDLVR</sequence>
<name>AROD1_ARATH</name>
<feature type="transit peptide" description="Chloroplast" evidence="1">
    <location>
        <begin position="1"/>
        <end position="48"/>
    </location>
</feature>
<feature type="chain" id="PRO_0000373790" description="Arogenate dehydratase/prephenate dehydratase 1, chloroplastic">
    <location>
        <begin position="49"/>
        <end position="392"/>
    </location>
</feature>
<feature type="domain" description="Prephenate dehydratase" evidence="2">
    <location>
        <begin position="107"/>
        <end position="282"/>
    </location>
</feature>
<feature type="domain" description="ACT" evidence="3">
    <location>
        <begin position="296"/>
        <end position="387"/>
    </location>
</feature>
<feature type="splice variant" id="VSP_037227" description="In isoform 2." evidence="7">
    <original>IESRPQRRRPLRVVDGS</original>
    <variation>VSSKEKLDPIISNSFQK</variation>
    <location>
        <begin position="325"/>
        <end position="341"/>
    </location>
</feature>
<feature type="splice variant" id="VSP_037228" description="In isoform 2." evidence="7">
    <location>
        <begin position="342"/>
        <end position="392"/>
    </location>
</feature>
<feature type="sequence conflict" description="In Ref. 4; AAM10090/AAK68844." evidence="7" ref="4">
    <original>L</original>
    <variation>H</variation>
    <location>
        <position position="146"/>
    </location>
</feature>
<organism>
    <name type="scientific">Arabidopsis thaliana</name>
    <name type="common">Mouse-ear cress</name>
    <dbReference type="NCBI Taxonomy" id="3702"/>
    <lineage>
        <taxon>Eukaryota</taxon>
        <taxon>Viridiplantae</taxon>
        <taxon>Streptophyta</taxon>
        <taxon>Embryophyta</taxon>
        <taxon>Tracheophyta</taxon>
        <taxon>Spermatophyta</taxon>
        <taxon>Magnoliopsida</taxon>
        <taxon>eudicotyledons</taxon>
        <taxon>Gunneridae</taxon>
        <taxon>Pentapetalae</taxon>
        <taxon>rosids</taxon>
        <taxon>malvids</taxon>
        <taxon>Brassicales</taxon>
        <taxon>Brassicaceae</taxon>
        <taxon>Camelineae</taxon>
        <taxon>Arabidopsis</taxon>
    </lineage>
</organism>
<keyword id="KW-0025">Alternative splicing</keyword>
<keyword id="KW-0028">Amino-acid biosynthesis</keyword>
<keyword id="KW-0057">Aromatic amino acid biosynthesis</keyword>
<keyword id="KW-0150">Chloroplast</keyword>
<keyword id="KW-0456">Lyase</keyword>
<keyword id="KW-0584">Phenylalanine biosynthesis</keyword>
<keyword id="KW-0934">Plastid</keyword>
<keyword id="KW-1185">Reference proteome</keyword>
<keyword id="KW-0809">Transit peptide</keyword>
<gene>
    <name evidence="6" type="primary">ADT1</name>
    <name evidence="6" type="synonym">PDT1</name>
    <name evidence="9" type="ordered locus">At1g11790</name>
    <name evidence="10" type="ORF">F25C20.4</name>
</gene>
<dbReference type="EC" id="4.2.1.51" evidence="4"/>
<dbReference type="EC" id="4.2.1.91" evidence="4"/>
<dbReference type="EMBL" id="DQ411466">
    <property type="protein sequence ID" value="ABD67752.1"/>
    <property type="molecule type" value="mRNA"/>
</dbReference>
<dbReference type="EMBL" id="AC007296">
    <property type="protein sequence ID" value="AAD30242.1"/>
    <property type="molecule type" value="Genomic_DNA"/>
</dbReference>
<dbReference type="EMBL" id="CP002684">
    <property type="protein sequence ID" value="AEE28786.1"/>
    <property type="molecule type" value="Genomic_DNA"/>
</dbReference>
<dbReference type="EMBL" id="CP002684">
    <property type="protein sequence ID" value="AEE28787.1"/>
    <property type="molecule type" value="Genomic_DNA"/>
</dbReference>
<dbReference type="EMBL" id="AY042904">
    <property type="protein sequence ID" value="AAK68844.1"/>
    <property type="molecule type" value="mRNA"/>
</dbReference>
<dbReference type="EMBL" id="AY081528">
    <property type="protein sequence ID" value="AAM10090.1"/>
    <property type="molecule type" value="mRNA"/>
</dbReference>
<dbReference type="PIR" id="A86252">
    <property type="entry name" value="A86252"/>
</dbReference>
<dbReference type="RefSeq" id="NP_001031024.1">
    <molecule id="Q9SA96-2"/>
    <property type="nucleotide sequence ID" value="NM_001035947.1"/>
</dbReference>
<dbReference type="RefSeq" id="NP_172644.1">
    <molecule id="Q9SA96-1"/>
    <property type="nucleotide sequence ID" value="NM_101051.3"/>
</dbReference>
<dbReference type="SMR" id="Q9SA96"/>
<dbReference type="BioGRID" id="22965">
    <property type="interactions" value="1"/>
</dbReference>
<dbReference type="FunCoup" id="Q9SA96">
    <property type="interactions" value="389"/>
</dbReference>
<dbReference type="STRING" id="3702.Q9SA96"/>
<dbReference type="PaxDb" id="3702-AT1G11790.1"/>
<dbReference type="ProteomicsDB" id="246989">
    <molecule id="Q9SA96-1"/>
</dbReference>
<dbReference type="EnsemblPlants" id="AT1G11790.1">
    <molecule id="Q9SA96-1"/>
    <property type="protein sequence ID" value="AT1G11790.1"/>
    <property type="gene ID" value="AT1G11790"/>
</dbReference>
<dbReference type="EnsemblPlants" id="AT1G11790.2">
    <molecule id="Q9SA96-2"/>
    <property type="protein sequence ID" value="AT1G11790.2"/>
    <property type="gene ID" value="AT1G11790"/>
</dbReference>
<dbReference type="GeneID" id="837725"/>
<dbReference type="Gramene" id="AT1G11790.1">
    <molecule id="Q9SA96-1"/>
    <property type="protein sequence ID" value="AT1G11790.1"/>
    <property type="gene ID" value="AT1G11790"/>
</dbReference>
<dbReference type="Gramene" id="AT1G11790.2">
    <molecule id="Q9SA96-2"/>
    <property type="protein sequence ID" value="AT1G11790.2"/>
    <property type="gene ID" value="AT1G11790"/>
</dbReference>
<dbReference type="KEGG" id="ath:AT1G11790"/>
<dbReference type="Araport" id="AT1G11790"/>
<dbReference type="TAIR" id="AT1G11790">
    <property type="gene designation" value="ADT1"/>
</dbReference>
<dbReference type="eggNOG" id="KOG2797">
    <property type="taxonomic scope" value="Eukaryota"/>
</dbReference>
<dbReference type="HOGENOM" id="CLU_035008_4_0_1"/>
<dbReference type="InParanoid" id="Q9SA96"/>
<dbReference type="OMA" id="CCTNQQH"/>
<dbReference type="PhylomeDB" id="Q9SA96"/>
<dbReference type="BioCyc" id="ARA:AT1G11790-MONOMER"/>
<dbReference type="BRENDA" id="4.2.1.91">
    <property type="organism ID" value="399"/>
</dbReference>
<dbReference type="SABIO-RK" id="Q9SA96"/>
<dbReference type="UniPathway" id="UPA00121">
    <property type="reaction ID" value="UER00344"/>
</dbReference>
<dbReference type="UniPathway" id="UPA00121">
    <property type="reaction ID" value="UER00345"/>
</dbReference>
<dbReference type="PRO" id="PR:Q9SA96"/>
<dbReference type="Proteomes" id="UP000006548">
    <property type="component" value="Chromosome 1"/>
</dbReference>
<dbReference type="ExpressionAtlas" id="Q9SA96">
    <property type="expression patterns" value="baseline and differential"/>
</dbReference>
<dbReference type="GO" id="GO:0009507">
    <property type="term" value="C:chloroplast"/>
    <property type="evidence" value="ECO:0000314"/>
    <property type="project" value="TAIR"/>
</dbReference>
<dbReference type="GO" id="GO:0009570">
    <property type="term" value="C:chloroplast stroma"/>
    <property type="evidence" value="ECO:0007669"/>
    <property type="project" value="UniProtKB-SubCell"/>
</dbReference>
<dbReference type="GO" id="GO:0047769">
    <property type="term" value="F:arogenate dehydratase activity"/>
    <property type="evidence" value="ECO:0000314"/>
    <property type="project" value="TAIR"/>
</dbReference>
<dbReference type="GO" id="GO:0004664">
    <property type="term" value="F:prephenate dehydratase activity"/>
    <property type="evidence" value="ECO:0007669"/>
    <property type="project" value="UniProtKB-EC"/>
</dbReference>
<dbReference type="GO" id="GO:0009094">
    <property type="term" value="P:L-phenylalanine biosynthetic process"/>
    <property type="evidence" value="ECO:0007669"/>
    <property type="project" value="UniProtKB-UniPathway"/>
</dbReference>
<dbReference type="CDD" id="cd04905">
    <property type="entry name" value="ACT_CM-PDT"/>
    <property type="match status" value="1"/>
</dbReference>
<dbReference type="CDD" id="cd13631">
    <property type="entry name" value="PBP2_Ct-PDT_like"/>
    <property type="match status" value="1"/>
</dbReference>
<dbReference type="FunFam" id="3.30.70.260:FF:000028">
    <property type="entry name" value="Arogenate dehydratase"/>
    <property type="match status" value="1"/>
</dbReference>
<dbReference type="FunFam" id="3.40.190.10:FF:000028">
    <property type="entry name" value="Arogenate dehydratase"/>
    <property type="match status" value="1"/>
</dbReference>
<dbReference type="FunFam" id="3.40.190.10:FF:000031">
    <property type="entry name" value="Arogenate dehydratase"/>
    <property type="match status" value="1"/>
</dbReference>
<dbReference type="Gene3D" id="3.30.70.260">
    <property type="match status" value="1"/>
</dbReference>
<dbReference type="Gene3D" id="3.40.190.10">
    <property type="entry name" value="Periplasmic binding protein-like II"/>
    <property type="match status" value="2"/>
</dbReference>
<dbReference type="InterPro" id="IPR045865">
    <property type="entry name" value="ACT-like_dom_sf"/>
</dbReference>
<dbReference type="InterPro" id="IPR002912">
    <property type="entry name" value="ACT_dom"/>
</dbReference>
<dbReference type="InterPro" id="IPR001086">
    <property type="entry name" value="Preph_deHydtase"/>
</dbReference>
<dbReference type="InterPro" id="IPR018528">
    <property type="entry name" value="Preph_deHydtase_CS"/>
</dbReference>
<dbReference type="NCBIfam" id="NF008865">
    <property type="entry name" value="PRK11898.1"/>
    <property type="match status" value="1"/>
</dbReference>
<dbReference type="PANTHER" id="PTHR21022:SF20">
    <property type="entry name" value="AROGENATE DEHYDRATASE_PREPHENATE DEHYDRATASE 1, CHLOROPLASTIC"/>
    <property type="match status" value="1"/>
</dbReference>
<dbReference type="PANTHER" id="PTHR21022">
    <property type="entry name" value="PREPHENATE DEHYDRATASE P PROTEIN"/>
    <property type="match status" value="1"/>
</dbReference>
<dbReference type="Pfam" id="PF00800">
    <property type="entry name" value="PDT"/>
    <property type="match status" value="1"/>
</dbReference>
<dbReference type="SUPFAM" id="SSF55021">
    <property type="entry name" value="ACT-like"/>
    <property type="match status" value="1"/>
</dbReference>
<dbReference type="SUPFAM" id="SSF53850">
    <property type="entry name" value="Periplasmic binding protein-like II"/>
    <property type="match status" value="1"/>
</dbReference>
<dbReference type="PROSITE" id="PS51671">
    <property type="entry name" value="ACT"/>
    <property type="match status" value="1"/>
</dbReference>
<dbReference type="PROSITE" id="PS00857">
    <property type="entry name" value="PREPHENATE_DEHYDR_1"/>
    <property type="match status" value="1"/>
</dbReference>
<dbReference type="PROSITE" id="PS00858">
    <property type="entry name" value="PREPHENATE_DEHYDR_2"/>
    <property type="match status" value="1"/>
</dbReference>
<dbReference type="PROSITE" id="PS51171">
    <property type="entry name" value="PREPHENATE_DEHYDR_3"/>
    <property type="match status" value="1"/>
</dbReference>